<organism>
    <name type="scientific">Thermus thermophilus (strain ATCC 27634 / DSM 579 / HB8)</name>
    <dbReference type="NCBI Taxonomy" id="300852"/>
    <lineage>
        <taxon>Bacteria</taxon>
        <taxon>Thermotogati</taxon>
        <taxon>Deinococcota</taxon>
        <taxon>Deinococci</taxon>
        <taxon>Thermales</taxon>
        <taxon>Thermaceae</taxon>
        <taxon>Thermus</taxon>
    </lineage>
</organism>
<gene>
    <name evidence="1" type="primary">aroQ</name>
    <name type="ordered locus">TTHA1354</name>
</gene>
<comment type="function">
    <text evidence="1">Catalyzes a trans-dehydration via an enolate intermediate.</text>
</comment>
<comment type="catalytic activity">
    <reaction evidence="1">
        <text>3-dehydroquinate = 3-dehydroshikimate + H2O</text>
        <dbReference type="Rhea" id="RHEA:21096"/>
        <dbReference type="ChEBI" id="CHEBI:15377"/>
        <dbReference type="ChEBI" id="CHEBI:16630"/>
        <dbReference type="ChEBI" id="CHEBI:32364"/>
        <dbReference type="EC" id="4.2.1.10"/>
    </reaction>
</comment>
<comment type="pathway">
    <text evidence="1">Metabolic intermediate biosynthesis; chorismate biosynthesis; chorismate from D-erythrose 4-phosphate and phosphoenolpyruvate: step 3/7.</text>
</comment>
<comment type="subunit">
    <text evidence="1">Homododecamer.</text>
</comment>
<comment type="similarity">
    <text evidence="1">Belongs to the type-II 3-dehydroquinase family.</text>
</comment>
<evidence type="ECO:0000255" key="1">
    <source>
        <dbReference type="HAMAP-Rule" id="MF_00169"/>
    </source>
</evidence>
<evidence type="ECO:0007829" key="2">
    <source>
        <dbReference type="PDB" id="2UYG"/>
    </source>
</evidence>
<reference key="1">
    <citation type="submission" date="2004-11" db="EMBL/GenBank/DDBJ databases">
        <title>Complete genome sequence of Thermus thermophilus HB8.</title>
        <authorList>
            <person name="Masui R."/>
            <person name="Kurokawa K."/>
            <person name="Nakagawa N."/>
            <person name="Tokunaga F."/>
            <person name="Koyama Y."/>
            <person name="Shibata T."/>
            <person name="Oshima T."/>
            <person name="Yokoyama S."/>
            <person name="Yasunaga T."/>
            <person name="Kuramitsu S."/>
        </authorList>
    </citation>
    <scope>NUCLEOTIDE SEQUENCE [LARGE SCALE GENOMIC DNA]</scope>
    <source>
        <strain>ATCC 27634 / DSM 579 / HB8</strain>
    </source>
</reference>
<protein>
    <recommendedName>
        <fullName evidence="1">3-dehydroquinate dehydratase</fullName>
        <shortName evidence="1">3-dehydroquinase</shortName>
        <ecNumber evidence="1">4.2.1.10</ecNumber>
    </recommendedName>
    <alternativeName>
        <fullName evidence="1">Type II DHQase</fullName>
    </alternativeName>
</protein>
<keyword id="KW-0002">3D-structure</keyword>
<keyword id="KW-0028">Amino-acid biosynthesis</keyword>
<keyword id="KW-0057">Aromatic amino acid biosynthesis</keyword>
<keyword id="KW-0456">Lyase</keyword>
<keyword id="KW-1185">Reference proteome</keyword>
<dbReference type="EC" id="4.2.1.10" evidence="1"/>
<dbReference type="EMBL" id="AP008226">
    <property type="protein sequence ID" value="BAD71177.1"/>
    <property type="molecule type" value="Genomic_DNA"/>
</dbReference>
<dbReference type="RefSeq" id="WP_011173409.1">
    <property type="nucleotide sequence ID" value="NC_006461.1"/>
</dbReference>
<dbReference type="RefSeq" id="YP_144620.1">
    <property type="nucleotide sequence ID" value="NC_006461.1"/>
</dbReference>
<dbReference type="PDB" id="2UYG">
    <property type="method" value="X-ray"/>
    <property type="resolution" value="2.20 A"/>
    <property type="chains" value="A/B/C/D/E/F/G/H/I/J/K/L=1-149"/>
</dbReference>
<dbReference type="PDBsum" id="2UYG"/>
<dbReference type="SMR" id="Q5SIL5"/>
<dbReference type="EnsemblBacteria" id="BAD71177">
    <property type="protein sequence ID" value="BAD71177"/>
    <property type="gene ID" value="BAD71177"/>
</dbReference>
<dbReference type="GeneID" id="3169111"/>
<dbReference type="KEGG" id="ttj:TTHA1354"/>
<dbReference type="PATRIC" id="fig|300852.9.peg.1331"/>
<dbReference type="eggNOG" id="COG0757">
    <property type="taxonomic scope" value="Bacteria"/>
</dbReference>
<dbReference type="HOGENOM" id="CLU_090968_3_0_0"/>
<dbReference type="PhylomeDB" id="Q5SIL5"/>
<dbReference type="UniPathway" id="UPA00053">
    <property type="reaction ID" value="UER00086"/>
</dbReference>
<dbReference type="EvolutionaryTrace" id="Q5SIL5"/>
<dbReference type="Proteomes" id="UP000000532">
    <property type="component" value="Chromosome"/>
</dbReference>
<dbReference type="GO" id="GO:0003855">
    <property type="term" value="F:3-dehydroquinate dehydratase activity"/>
    <property type="evidence" value="ECO:0007669"/>
    <property type="project" value="UniProtKB-UniRule"/>
</dbReference>
<dbReference type="GO" id="GO:0008652">
    <property type="term" value="P:amino acid biosynthetic process"/>
    <property type="evidence" value="ECO:0007669"/>
    <property type="project" value="UniProtKB-KW"/>
</dbReference>
<dbReference type="GO" id="GO:0009073">
    <property type="term" value="P:aromatic amino acid family biosynthetic process"/>
    <property type="evidence" value="ECO:0007669"/>
    <property type="project" value="UniProtKB-KW"/>
</dbReference>
<dbReference type="GO" id="GO:0009423">
    <property type="term" value="P:chorismate biosynthetic process"/>
    <property type="evidence" value="ECO:0007669"/>
    <property type="project" value="UniProtKB-UniRule"/>
</dbReference>
<dbReference type="GO" id="GO:0019631">
    <property type="term" value="P:quinate catabolic process"/>
    <property type="evidence" value="ECO:0007669"/>
    <property type="project" value="TreeGrafter"/>
</dbReference>
<dbReference type="CDD" id="cd00466">
    <property type="entry name" value="DHQase_II"/>
    <property type="match status" value="1"/>
</dbReference>
<dbReference type="Gene3D" id="3.40.50.9100">
    <property type="entry name" value="Dehydroquinase, class II"/>
    <property type="match status" value="1"/>
</dbReference>
<dbReference type="HAMAP" id="MF_00169">
    <property type="entry name" value="AroQ"/>
    <property type="match status" value="1"/>
</dbReference>
<dbReference type="InterPro" id="IPR001874">
    <property type="entry name" value="DHquinase_II"/>
</dbReference>
<dbReference type="InterPro" id="IPR018509">
    <property type="entry name" value="DHquinase_II_CS"/>
</dbReference>
<dbReference type="InterPro" id="IPR036441">
    <property type="entry name" value="DHquinase_II_sf"/>
</dbReference>
<dbReference type="NCBIfam" id="TIGR01088">
    <property type="entry name" value="aroQ"/>
    <property type="match status" value="1"/>
</dbReference>
<dbReference type="NCBIfam" id="NF003805">
    <property type="entry name" value="PRK05395.1-2"/>
    <property type="match status" value="1"/>
</dbReference>
<dbReference type="NCBIfam" id="NF003806">
    <property type="entry name" value="PRK05395.1-3"/>
    <property type="match status" value="1"/>
</dbReference>
<dbReference type="NCBIfam" id="NF003807">
    <property type="entry name" value="PRK05395.1-4"/>
    <property type="match status" value="1"/>
</dbReference>
<dbReference type="PANTHER" id="PTHR21272">
    <property type="entry name" value="CATABOLIC 3-DEHYDROQUINASE"/>
    <property type="match status" value="1"/>
</dbReference>
<dbReference type="PANTHER" id="PTHR21272:SF3">
    <property type="entry name" value="CATABOLIC 3-DEHYDROQUINASE"/>
    <property type="match status" value="1"/>
</dbReference>
<dbReference type="Pfam" id="PF01220">
    <property type="entry name" value="DHquinase_II"/>
    <property type="match status" value="1"/>
</dbReference>
<dbReference type="PIRSF" id="PIRSF001399">
    <property type="entry name" value="DHquinase_II"/>
    <property type="match status" value="1"/>
</dbReference>
<dbReference type="SUPFAM" id="SSF52304">
    <property type="entry name" value="Type II 3-dehydroquinate dehydratase"/>
    <property type="match status" value="1"/>
</dbReference>
<dbReference type="PROSITE" id="PS01029">
    <property type="entry name" value="DEHYDROQUINASE_II"/>
    <property type="match status" value="1"/>
</dbReference>
<proteinExistence type="evidence at protein level"/>
<feature type="chain" id="PRO_1000023528" description="3-dehydroquinate dehydratase">
    <location>
        <begin position="1"/>
        <end position="149"/>
    </location>
</feature>
<feature type="active site" description="Proton acceptor" evidence="1">
    <location>
        <position position="21"/>
    </location>
</feature>
<feature type="active site" description="Proton donor" evidence="1">
    <location>
        <position position="99"/>
    </location>
</feature>
<feature type="binding site" evidence="1">
    <location>
        <position position="73"/>
    </location>
    <ligand>
        <name>substrate</name>
    </ligand>
</feature>
<feature type="binding site" evidence="1">
    <location>
        <position position="79"/>
    </location>
    <ligand>
        <name>substrate</name>
    </ligand>
</feature>
<feature type="binding site" evidence="1">
    <location>
        <position position="86"/>
    </location>
    <ligand>
        <name>substrate</name>
    </ligand>
</feature>
<feature type="binding site" evidence="1">
    <location>
        <begin position="100"/>
        <end position="101"/>
    </location>
    <ligand>
        <name>substrate</name>
    </ligand>
</feature>
<feature type="binding site" evidence="1">
    <location>
        <position position="110"/>
    </location>
    <ligand>
        <name>substrate</name>
    </ligand>
</feature>
<feature type="site" description="Transition state stabilizer" evidence="1">
    <location>
        <position position="16"/>
    </location>
</feature>
<feature type="strand" evidence="2">
    <location>
        <begin position="2"/>
        <end position="6"/>
    </location>
</feature>
<feature type="helix" evidence="2">
    <location>
        <begin position="10"/>
        <end position="12"/>
    </location>
</feature>
<feature type="turn" evidence="2">
    <location>
        <begin position="13"/>
        <end position="15"/>
    </location>
</feature>
<feature type="strand" evidence="2">
    <location>
        <begin position="18"/>
        <end position="21"/>
    </location>
</feature>
<feature type="helix" evidence="2">
    <location>
        <begin position="26"/>
        <end position="39"/>
    </location>
</feature>
<feature type="strand" evidence="2">
    <location>
        <begin position="44"/>
        <end position="48"/>
    </location>
</feature>
<feature type="helix" evidence="2">
    <location>
        <begin position="52"/>
        <end position="61"/>
    </location>
</feature>
<feature type="turn" evidence="2">
    <location>
        <begin position="62"/>
        <end position="66"/>
    </location>
</feature>
<feature type="strand" evidence="2">
    <location>
        <begin position="68"/>
        <end position="73"/>
    </location>
</feature>
<feature type="helix" evidence="2">
    <location>
        <begin position="75"/>
        <end position="79"/>
    </location>
</feature>
<feature type="helix" evidence="2">
    <location>
        <begin position="82"/>
        <end position="89"/>
    </location>
</feature>
<feature type="strand" evidence="2">
    <location>
        <begin position="95"/>
        <end position="101"/>
    </location>
</feature>
<feature type="helix" evidence="2">
    <location>
        <begin position="103"/>
        <end position="105"/>
    </location>
</feature>
<feature type="helix" evidence="2">
    <location>
        <begin position="108"/>
        <end position="111"/>
    </location>
</feature>
<feature type="helix" evidence="2">
    <location>
        <begin position="116"/>
        <end position="118"/>
    </location>
</feature>
<feature type="strand" evidence="2">
    <location>
        <begin position="119"/>
        <end position="126"/>
    </location>
</feature>
<feature type="helix" evidence="2">
    <location>
        <begin position="129"/>
        <end position="140"/>
    </location>
</feature>
<accession>Q5SIL5</accession>
<name>AROQ_THET8</name>
<sequence length="149" mass="16454">MVLILNGPNLNLLGRREPEVYGRTTLEELEALCEAWGAELGLGVVFRQTNYEGQLIEWVQQAHQEGFLAIVLNPGALTHYSYALLDAIRAQPLPVVEVHLTNLHAREEFRRHSVTAPACRGIVSGFGPLSYKLALVYLAETLEVGGEGF</sequence>